<reference key="1">
    <citation type="journal article" date="2000" name="Nature">
        <title>Complete genome sequence of Pseudomonas aeruginosa PAO1, an opportunistic pathogen.</title>
        <authorList>
            <person name="Stover C.K."/>
            <person name="Pham X.-Q.T."/>
            <person name="Erwin A.L."/>
            <person name="Mizoguchi S.D."/>
            <person name="Warrener P."/>
            <person name="Hickey M.J."/>
            <person name="Brinkman F.S.L."/>
            <person name="Hufnagle W.O."/>
            <person name="Kowalik D.J."/>
            <person name="Lagrou M."/>
            <person name="Garber R.L."/>
            <person name="Goltry L."/>
            <person name="Tolentino E."/>
            <person name="Westbrock-Wadman S."/>
            <person name="Yuan Y."/>
            <person name="Brody L.L."/>
            <person name="Coulter S.N."/>
            <person name="Folger K.R."/>
            <person name="Kas A."/>
            <person name="Larbig K."/>
            <person name="Lim R.M."/>
            <person name="Smith K.A."/>
            <person name="Spencer D.H."/>
            <person name="Wong G.K.-S."/>
            <person name="Wu Z."/>
            <person name="Paulsen I.T."/>
            <person name="Reizer J."/>
            <person name="Saier M.H. Jr."/>
            <person name="Hancock R.E.W."/>
            <person name="Lory S."/>
            <person name="Olson M.V."/>
        </authorList>
    </citation>
    <scope>NUCLEOTIDE SEQUENCE [LARGE SCALE GENOMIC DNA]</scope>
    <source>
        <strain>ATCC 15692 / DSM 22644 / CIP 104116 / JCM 14847 / LMG 12228 / 1C / PRS 101 / PAO1</strain>
    </source>
</reference>
<reference key="2">
    <citation type="journal article" date="2019" name="Int. J. Mol. Sci.">
        <title>Determination of Ligand Profiles for Pseudomonas aeruginosa Solute Binding Proteins.</title>
        <authorList>
            <person name="Fernandez M."/>
            <person name="Rico-Jimenez M."/>
            <person name="Ortega A."/>
            <person name="Daddaoua A."/>
            <person name="Garcia Garcia A.I."/>
            <person name="Martin-Mora D."/>
            <person name="Torres N.M."/>
            <person name="Tajuelo A."/>
            <person name="Matilla M.A."/>
            <person name="Krell T."/>
        </authorList>
    </citation>
    <scope>FUNCTION AS A BINDING PROTEIN</scope>
    <source>
        <strain>ATCC 15692 / DSM 22644 / CIP 104116 / JCM 14847 / LMG 12228 / 1C / PRS 101 / PAO1</strain>
    </source>
</reference>
<name>THSBP_PSEAE</name>
<evidence type="ECO:0000255" key="1"/>
<evidence type="ECO:0000269" key="2">
    <source>
    </source>
</evidence>
<evidence type="ECO:0000305" key="3"/>
<evidence type="ECO:0000312" key="4">
    <source>
        <dbReference type="EMBL" id="AAG04882.1"/>
    </source>
</evidence>
<gene>
    <name evidence="4" type="primary">cysP</name>
    <name evidence="4" type="ordered locus">PA1493</name>
</gene>
<dbReference type="EMBL" id="AE004091">
    <property type="protein sequence ID" value="AAG04882.1"/>
    <property type="molecule type" value="Genomic_DNA"/>
</dbReference>
<dbReference type="PIR" id="G83458">
    <property type="entry name" value="G83458"/>
</dbReference>
<dbReference type="RefSeq" id="NP_250184.1">
    <property type="nucleotide sequence ID" value="NC_002516.2"/>
</dbReference>
<dbReference type="RefSeq" id="WP_003087175.1">
    <property type="nucleotide sequence ID" value="NZ_QZGE01000005.1"/>
</dbReference>
<dbReference type="SMR" id="Q9I3L9"/>
<dbReference type="STRING" id="208964.PA1493"/>
<dbReference type="PaxDb" id="208964-PA1493"/>
<dbReference type="GeneID" id="881623"/>
<dbReference type="KEGG" id="pae:PA1493"/>
<dbReference type="PATRIC" id="fig|208964.12.peg.1545"/>
<dbReference type="PseudoCAP" id="PA1493"/>
<dbReference type="HOGENOM" id="CLU_055615_0_1_6"/>
<dbReference type="InParanoid" id="Q9I3L9"/>
<dbReference type="OrthoDB" id="9802127at2"/>
<dbReference type="PhylomeDB" id="Q9I3L9"/>
<dbReference type="BioCyc" id="PAER208964:G1FZ6-1520-MONOMER"/>
<dbReference type="Proteomes" id="UP000002438">
    <property type="component" value="Chromosome"/>
</dbReference>
<dbReference type="GO" id="GO:0005615">
    <property type="term" value="C:extracellular space"/>
    <property type="evidence" value="ECO:0000314"/>
    <property type="project" value="PseudoCAP"/>
</dbReference>
<dbReference type="GO" id="GO:0030288">
    <property type="term" value="C:outer membrane-bounded periplasmic space"/>
    <property type="evidence" value="ECO:0000318"/>
    <property type="project" value="GO_Central"/>
</dbReference>
<dbReference type="GO" id="GO:0140104">
    <property type="term" value="F:molecular carrier activity"/>
    <property type="evidence" value="ECO:0007669"/>
    <property type="project" value="InterPro"/>
</dbReference>
<dbReference type="GO" id="GO:0043199">
    <property type="term" value="F:sulfate binding"/>
    <property type="evidence" value="ECO:0000318"/>
    <property type="project" value="GO_Central"/>
</dbReference>
<dbReference type="GO" id="GO:1902358">
    <property type="term" value="P:sulfate transmembrane transport"/>
    <property type="evidence" value="ECO:0007669"/>
    <property type="project" value="InterPro"/>
</dbReference>
<dbReference type="GO" id="GO:0006790">
    <property type="term" value="P:sulfur compound metabolic process"/>
    <property type="evidence" value="ECO:0000318"/>
    <property type="project" value="GO_Central"/>
</dbReference>
<dbReference type="CDD" id="cd01005">
    <property type="entry name" value="PBP2_CysP"/>
    <property type="match status" value="1"/>
</dbReference>
<dbReference type="Gene3D" id="3.40.190.10">
    <property type="entry name" value="Periplasmic binding protein-like II"/>
    <property type="match status" value="2"/>
</dbReference>
<dbReference type="InterPro" id="IPR005669">
    <property type="entry name" value="Thiosulph/SO4-bd"/>
</dbReference>
<dbReference type="NCBIfam" id="TIGR00971">
    <property type="entry name" value="3a0106s03"/>
    <property type="match status" value="1"/>
</dbReference>
<dbReference type="NCBIfam" id="NF008022">
    <property type="entry name" value="PRK10752.1"/>
    <property type="match status" value="1"/>
</dbReference>
<dbReference type="NCBIfam" id="NF008106">
    <property type="entry name" value="PRK10852.1"/>
    <property type="match status" value="1"/>
</dbReference>
<dbReference type="PANTHER" id="PTHR30368">
    <property type="entry name" value="SULFATE-BINDING PROTEIN"/>
    <property type="match status" value="1"/>
</dbReference>
<dbReference type="PANTHER" id="PTHR30368:SF2">
    <property type="entry name" value="SULFATE-BINDING PROTEIN"/>
    <property type="match status" value="1"/>
</dbReference>
<dbReference type="Pfam" id="PF13531">
    <property type="entry name" value="SBP_bac_11"/>
    <property type="match status" value="1"/>
</dbReference>
<dbReference type="SUPFAM" id="SSF53850">
    <property type="entry name" value="Periplasmic binding protein-like II"/>
    <property type="match status" value="1"/>
</dbReference>
<protein>
    <recommendedName>
        <fullName evidence="3">Thiosulfate-binding protein</fullName>
    </recommendedName>
</protein>
<sequence>MKRLFSASLLAAGLALGGAAHAAQPLLNVSYDVMRDFYKEYNPAFQKYWKAEKGENITIQMSHGGSSKQARSVIDGLPADVITMNQATDIDALADNGGLVPKDWATRLPNNSAPFTSATVFIVRKGNPKALKDWPDLLKDGVQVVVPNPKTSGNGRYTYLSAWGYVLKNGGDENKAKEFVGKLFKQVPVLDTGGRAATTTFMQNQIGDVLVTFENEAEMIAREFGRGGFEVVYPSVSAEAEPPVAVVDKVVEKKGSRAQAEAYLKYLWSDEGQTIAANNYLRPRNPEILAKFADRFPKVDFFSVEKTFGDWRSVQKTHFIDGGVFDQIYSPN</sequence>
<feature type="signal peptide" evidence="1">
    <location>
        <begin position="1"/>
        <end position="22"/>
    </location>
</feature>
<feature type="chain" id="PRO_5004328472" description="Thiosulfate-binding protein" evidence="1">
    <location>
        <begin position="23"/>
        <end position="332"/>
    </location>
</feature>
<proteinExistence type="evidence at protein level"/>
<comment type="function">
    <text evidence="2">Binds thiosulfate specifically and with high affinity. Has no detectable affinity for sulfate.</text>
</comment>
<comment type="subcellular location">
    <subcellularLocation>
        <location evidence="3">Periplasm</location>
    </subcellularLocation>
</comment>
<comment type="similarity">
    <text evidence="3">Belongs to the prokaryotic sulfate-binding protein family.</text>
</comment>
<organism>
    <name type="scientific">Pseudomonas aeruginosa (strain ATCC 15692 / DSM 22644 / CIP 104116 / JCM 14847 / LMG 12228 / 1C / PRS 101 / PAO1)</name>
    <dbReference type="NCBI Taxonomy" id="208964"/>
    <lineage>
        <taxon>Bacteria</taxon>
        <taxon>Pseudomonadati</taxon>
        <taxon>Pseudomonadota</taxon>
        <taxon>Gammaproteobacteria</taxon>
        <taxon>Pseudomonadales</taxon>
        <taxon>Pseudomonadaceae</taxon>
        <taxon>Pseudomonas</taxon>
    </lineage>
</organism>
<keyword id="KW-0574">Periplasm</keyword>
<keyword id="KW-1185">Reference proteome</keyword>
<keyword id="KW-0732">Signal</keyword>
<keyword id="KW-0813">Transport</keyword>
<accession>Q9I3L9</accession>